<gene>
    <name type="primary">nop7</name>
    <name type="ORF">G17B7.070</name>
    <name type="ORF">NCU00925</name>
</gene>
<accession>Q7SFC2</accession>
<evidence type="ECO:0000255" key="1">
    <source>
        <dbReference type="HAMAP-Rule" id="MF_03028"/>
    </source>
</evidence>
<evidence type="ECO:0000256" key="2">
    <source>
        <dbReference type="SAM" id="MobiDB-lite"/>
    </source>
</evidence>
<keyword id="KW-0175">Coiled coil</keyword>
<keyword id="KW-0539">Nucleus</keyword>
<keyword id="KW-1185">Reference proteome</keyword>
<keyword id="KW-0690">Ribosome biogenesis</keyword>
<keyword id="KW-0698">rRNA processing</keyword>
<feature type="chain" id="PRO_0000370498" description="Pescadillo homolog">
    <location>
        <begin position="1"/>
        <end position="663"/>
    </location>
</feature>
<feature type="domain" description="BRCT" evidence="1">
    <location>
        <begin position="361"/>
        <end position="477"/>
    </location>
</feature>
<feature type="region of interest" description="Disordered" evidence="2">
    <location>
        <begin position="311"/>
        <end position="360"/>
    </location>
</feature>
<feature type="region of interest" description="Disordered" evidence="2">
    <location>
        <begin position="428"/>
        <end position="447"/>
    </location>
</feature>
<feature type="region of interest" description="Disordered" evidence="2">
    <location>
        <begin position="504"/>
        <end position="663"/>
    </location>
</feature>
<feature type="coiled-coil region" evidence="1">
    <location>
        <begin position="501"/>
        <end position="663"/>
    </location>
</feature>
<feature type="compositionally biased region" description="Basic and acidic residues" evidence="2">
    <location>
        <begin position="311"/>
        <end position="321"/>
    </location>
</feature>
<feature type="compositionally biased region" description="Acidic residues" evidence="2">
    <location>
        <begin position="322"/>
        <end position="334"/>
    </location>
</feature>
<feature type="compositionally biased region" description="Acidic residues" evidence="2">
    <location>
        <begin position="526"/>
        <end position="567"/>
    </location>
</feature>
<feature type="compositionally biased region" description="Basic and acidic residues" evidence="2">
    <location>
        <begin position="591"/>
        <end position="620"/>
    </location>
</feature>
<sequence>MPKIKKKGQAGAAKNYITRTQAVKKLQLSLPDFRKLCIWKGIYPREPRNKKKVSKSATASTTFYYTKDIQYLLHEPLLQKFRDQKVLEKKISRALGRGDVSDAARFERHAARPEATGKPRYTLNHVIRERYPTFNDALRDLDDCLSMLFLFANLPSTSAVPAKMIARCERLCLEFQHYLIVSHSLRKSFLSIKGIYYQANIQGEDILWLVPYKFNQRIVGDVDFRIMGTFVEFYMTLLGFVNYRLYSSIGLKYPPKFDQLKDENGAELGAFSLEGVNMATQGETKAVTNGEEQQQGPDPKVQAEVDKIIKQLKEDESKSDETAEEDAEADDEEKPTDSIDKFEPVAPGGDVLPQPAYSSSDPSQLFANFTFYLSRETPRQPLEFILRAFGCKRIGWDSVLGEGAFTNDESDPSITHHIIDRPVVQAATNEDGDGEDNQTAQKVGPNQRYPGRIYVQPQWVWDCVNDEELKSPELYAPGAALPPHLSPFVKAAPGQYDPTLPLEAQQTEAEAIEADLEDAEKGNAEDGSDVENDMDVDEAEDDEEEEEGDEEDAEEAEEEDAEEDEEESKTLQRQLELEAELQGKKVQNTKVDSKTKAKLEQRKALEKKAREEAEDLERAKGMLSKKKRKLFEQMQYTNNKKSAQDEKLRAKRRKLEKEKAQKA</sequence>
<proteinExistence type="inferred from homology"/>
<name>PESC_NEUCR</name>
<comment type="function">
    <text evidence="1">Component of the NOP7 complex, which is required for maturation of the 25S and 5.8S ribosomal RNAs and formation of the 60S ribosome.</text>
</comment>
<comment type="subunit">
    <text evidence="1">Component of the NOP7 complex, composed of erb1, nop7 and ytm1. The complex is held together by erb1, which interacts with nop7 via its N-terminal domain and with ytm1 via a high-affinity interaction between the seven-bladed beta-propeller domains of the 2 proteins. The NOP7 complex associates with the 66S pre-ribosome.</text>
</comment>
<comment type="subcellular location">
    <subcellularLocation>
        <location evidence="1">Nucleus</location>
        <location evidence="1">Nucleolus</location>
    </subcellularLocation>
    <subcellularLocation>
        <location evidence="1">Nucleus</location>
        <location evidence="1">Nucleoplasm</location>
    </subcellularLocation>
</comment>
<comment type="similarity">
    <text evidence="1">Belongs to the pescadillo family.</text>
</comment>
<dbReference type="EMBL" id="BX842638">
    <property type="protein sequence ID" value="CAE76578.1"/>
    <property type="molecule type" value="Genomic_DNA"/>
</dbReference>
<dbReference type="EMBL" id="CM002236">
    <property type="protein sequence ID" value="EAA35515.1"/>
    <property type="molecule type" value="Genomic_DNA"/>
</dbReference>
<dbReference type="RefSeq" id="XP_964751.1">
    <property type="nucleotide sequence ID" value="XM_959658.2"/>
</dbReference>
<dbReference type="SMR" id="Q7SFC2"/>
<dbReference type="FunCoup" id="Q7SFC2">
    <property type="interactions" value="1219"/>
</dbReference>
<dbReference type="STRING" id="367110.Q7SFC2"/>
<dbReference type="PaxDb" id="5141-EFNCRP00000000694"/>
<dbReference type="EnsemblFungi" id="EAA35515">
    <property type="protein sequence ID" value="EAA35515"/>
    <property type="gene ID" value="NCU00925"/>
</dbReference>
<dbReference type="GeneID" id="3880904"/>
<dbReference type="KEGG" id="ncr:NCU00925"/>
<dbReference type="VEuPathDB" id="FungiDB:NCU00925"/>
<dbReference type="HOGENOM" id="CLU_019619_1_1_1"/>
<dbReference type="InParanoid" id="Q7SFC2"/>
<dbReference type="OrthoDB" id="10264910at2759"/>
<dbReference type="Proteomes" id="UP000001805">
    <property type="component" value="Chromosome 1, Linkage Group I"/>
</dbReference>
<dbReference type="GO" id="GO:0005654">
    <property type="term" value="C:nucleoplasm"/>
    <property type="evidence" value="ECO:0007669"/>
    <property type="project" value="UniProtKB-SubCell"/>
</dbReference>
<dbReference type="GO" id="GO:0070545">
    <property type="term" value="C:PeBoW complex"/>
    <property type="evidence" value="ECO:0000318"/>
    <property type="project" value="GO_Central"/>
</dbReference>
<dbReference type="GO" id="GO:0030687">
    <property type="term" value="C:preribosome, large subunit precursor"/>
    <property type="evidence" value="ECO:0007669"/>
    <property type="project" value="UniProtKB-UniRule"/>
</dbReference>
<dbReference type="GO" id="GO:0043021">
    <property type="term" value="F:ribonucleoprotein complex binding"/>
    <property type="evidence" value="ECO:0007669"/>
    <property type="project" value="UniProtKB-UniRule"/>
</dbReference>
<dbReference type="GO" id="GO:0003723">
    <property type="term" value="F:RNA binding"/>
    <property type="evidence" value="ECO:0000318"/>
    <property type="project" value="GO_Central"/>
</dbReference>
<dbReference type="GO" id="GO:0000466">
    <property type="term" value="P:maturation of 5.8S rRNA from tricistronic rRNA transcript (SSU-rRNA, 5.8S rRNA, LSU-rRNA)"/>
    <property type="evidence" value="ECO:0007669"/>
    <property type="project" value="UniProtKB-UniRule"/>
</dbReference>
<dbReference type="GO" id="GO:0000463">
    <property type="term" value="P:maturation of LSU-rRNA from tricistronic rRNA transcript (SSU-rRNA, 5.8S rRNA, LSU-rRNA)"/>
    <property type="evidence" value="ECO:0000318"/>
    <property type="project" value="GO_Central"/>
</dbReference>
<dbReference type="CDD" id="cd17709">
    <property type="entry name" value="BRCT_pescadillo_like"/>
    <property type="match status" value="1"/>
</dbReference>
<dbReference type="FunFam" id="3.40.50.10190:FF:000056">
    <property type="entry name" value="Pescadillo homolog"/>
    <property type="match status" value="1"/>
</dbReference>
<dbReference type="Gene3D" id="3.40.50.10190">
    <property type="entry name" value="BRCT domain"/>
    <property type="match status" value="1"/>
</dbReference>
<dbReference type="HAMAP" id="MF_03028">
    <property type="entry name" value="Pescadillo"/>
    <property type="match status" value="1"/>
</dbReference>
<dbReference type="InterPro" id="IPR001357">
    <property type="entry name" value="BRCT_dom"/>
</dbReference>
<dbReference type="InterPro" id="IPR036420">
    <property type="entry name" value="BRCT_dom_sf"/>
</dbReference>
<dbReference type="InterPro" id="IPR010613">
    <property type="entry name" value="PES"/>
</dbReference>
<dbReference type="PANTHER" id="PTHR12221">
    <property type="entry name" value="PESCADILLO - RELATED"/>
    <property type="match status" value="1"/>
</dbReference>
<dbReference type="PANTHER" id="PTHR12221:SF6">
    <property type="entry name" value="PESCADILLO HOMOLOG"/>
    <property type="match status" value="1"/>
</dbReference>
<dbReference type="Pfam" id="PF06732">
    <property type="entry name" value="Pescadillo_N"/>
    <property type="match status" value="1"/>
</dbReference>
<dbReference type="SUPFAM" id="SSF52113">
    <property type="entry name" value="BRCT domain"/>
    <property type="match status" value="1"/>
</dbReference>
<dbReference type="PROSITE" id="PS50172">
    <property type="entry name" value="BRCT"/>
    <property type="match status" value="1"/>
</dbReference>
<protein>
    <recommendedName>
        <fullName evidence="1">Pescadillo homolog</fullName>
    </recommendedName>
    <alternativeName>
        <fullName evidence="1">Nucleolar protein 7 homolog</fullName>
    </alternativeName>
</protein>
<reference key="1">
    <citation type="journal article" date="2003" name="Nucleic Acids Res.">
        <title>What's in the genome of a filamentous fungus? Analysis of the Neurospora genome sequence.</title>
        <authorList>
            <person name="Mannhaupt G."/>
            <person name="Montrone C."/>
            <person name="Haase D."/>
            <person name="Mewes H.-W."/>
            <person name="Aign V."/>
            <person name="Hoheisel J.D."/>
            <person name="Fartmann B."/>
            <person name="Nyakatura G."/>
            <person name="Kempken F."/>
            <person name="Maier J."/>
            <person name="Schulte U."/>
        </authorList>
    </citation>
    <scope>NUCLEOTIDE SEQUENCE [LARGE SCALE GENOMIC DNA]</scope>
    <source>
        <strain>ATCC 24698 / 74-OR23-1A / CBS 708.71 / DSM 1257 / FGSC 987</strain>
    </source>
</reference>
<reference key="2">
    <citation type="journal article" date="2003" name="Nature">
        <title>The genome sequence of the filamentous fungus Neurospora crassa.</title>
        <authorList>
            <person name="Galagan J.E."/>
            <person name="Calvo S.E."/>
            <person name="Borkovich K.A."/>
            <person name="Selker E.U."/>
            <person name="Read N.D."/>
            <person name="Jaffe D.B."/>
            <person name="FitzHugh W."/>
            <person name="Ma L.-J."/>
            <person name="Smirnov S."/>
            <person name="Purcell S."/>
            <person name="Rehman B."/>
            <person name="Elkins T."/>
            <person name="Engels R."/>
            <person name="Wang S."/>
            <person name="Nielsen C.B."/>
            <person name="Butler J."/>
            <person name="Endrizzi M."/>
            <person name="Qui D."/>
            <person name="Ianakiev P."/>
            <person name="Bell-Pedersen D."/>
            <person name="Nelson M.A."/>
            <person name="Werner-Washburne M."/>
            <person name="Selitrennikoff C.P."/>
            <person name="Kinsey J.A."/>
            <person name="Braun E.L."/>
            <person name="Zelter A."/>
            <person name="Schulte U."/>
            <person name="Kothe G.O."/>
            <person name="Jedd G."/>
            <person name="Mewes H.-W."/>
            <person name="Staben C."/>
            <person name="Marcotte E."/>
            <person name="Greenberg D."/>
            <person name="Roy A."/>
            <person name="Foley K."/>
            <person name="Naylor J."/>
            <person name="Stange-Thomann N."/>
            <person name="Barrett R."/>
            <person name="Gnerre S."/>
            <person name="Kamal M."/>
            <person name="Kamvysselis M."/>
            <person name="Mauceli E.W."/>
            <person name="Bielke C."/>
            <person name="Rudd S."/>
            <person name="Frishman D."/>
            <person name="Krystofova S."/>
            <person name="Rasmussen C."/>
            <person name="Metzenberg R.L."/>
            <person name="Perkins D.D."/>
            <person name="Kroken S."/>
            <person name="Cogoni C."/>
            <person name="Macino G."/>
            <person name="Catcheside D.E.A."/>
            <person name="Li W."/>
            <person name="Pratt R.J."/>
            <person name="Osmani S.A."/>
            <person name="DeSouza C.P.C."/>
            <person name="Glass N.L."/>
            <person name="Orbach M.J."/>
            <person name="Berglund J.A."/>
            <person name="Voelker R."/>
            <person name="Yarden O."/>
            <person name="Plamann M."/>
            <person name="Seiler S."/>
            <person name="Dunlap J.C."/>
            <person name="Radford A."/>
            <person name="Aramayo R."/>
            <person name="Natvig D.O."/>
            <person name="Alex L.A."/>
            <person name="Mannhaupt G."/>
            <person name="Ebbole D.J."/>
            <person name="Freitag M."/>
            <person name="Paulsen I."/>
            <person name="Sachs M.S."/>
            <person name="Lander E.S."/>
            <person name="Nusbaum C."/>
            <person name="Birren B.W."/>
        </authorList>
    </citation>
    <scope>NUCLEOTIDE SEQUENCE [LARGE SCALE GENOMIC DNA]</scope>
    <source>
        <strain>ATCC 24698 / 74-OR23-1A / CBS 708.71 / DSM 1257 / FGSC 987</strain>
    </source>
</reference>
<organism>
    <name type="scientific">Neurospora crassa (strain ATCC 24698 / 74-OR23-1A / CBS 708.71 / DSM 1257 / FGSC 987)</name>
    <dbReference type="NCBI Taxonomy" id="367110"/>
    <lineage>
        <taxon>Eukaryota</taxon>
        <taxon>Fungi</taxon>
        <taxon>Dikarya</taxon>
        <taxon>Ascomycota</taxon>
        <taxon>Pezizomycotina</taxon>
        <taxon>Sordariomycetes</taxon>
        <taxon>Sordariomycetidae</taxon>
        <taxon>Sordariales</taxon>
        <taxon>Sordariaceae</taxon>
        <taxon>Neurospora</taxon>
    </lineage>
</organism>